<evidence type="ECO:0000250" key="1"/>
<evidence type="ECO:0000255" key="2">
    <source>
        <dbReference type="HAMAP-Rule" id="MF_00062"/>
    </source>
</evidence>
<accession>B7VKY2</accession>
<keyword id="KW-0067">ATP-binding</keyword>
<keyword id="KW-0342">GTP-binding</keyword>
<keyword id="KW-0547">Nucleotide-binding</keyword>
<keyword id="KW-0548">Nucleotidyltransferase</keyword>
<keyword id="KW-0808">Transferase</keyword>
<name>CYSN_VIBA3</name>
<comment type="function">
    <text evidence="2">With CysD forms the ATP sulfurylase (ATPS) that catalyzes the adenylation of sulfate producing adenosine 5'-phosphosulfate (APS) and diphosphate, the first enzymatic step in sulfur assimilation pathway. APS synthesis involves the formation of a high-energy phosphoric-sulfuric acid anhydride bond driven by GTP hydrolysis by CysN coupled to ATP hydrolysis by CysD.</text>
</comment>
<comment type="catalytic activity">
    <reaction evidence="2">
        <text>sulfate + ATP + H(+) = adenosine 5'-phosphosulfate + diphosphate</text>
        <dbReference type="Rhea" id="RHEA:18133"/>
        <dbReference type="ChEBI" id="CHEBI:15378"/>
        <dbReference type="ChEBI" id="CHEBI:16189"/>
        <dbReference type="ChEBI" id="CHEBI:30616"/>
        <dbReference type="ChEBI" id="CHEBI:33019"/>
        <dbReference type="ChEBI" id="CHEBI:58243"/>
        <dbReference type="EC" id="2.7.7.4"/>
    </reaction>
</comment>
<comment type="pathway">
    <text evidence="2">Sulfur metabolism; hydrogen sulfide biosynthesis; sulfite from sulfate: step 1/3.</text>
</comment>
<comment type="subunit">
    <text evidence="2">Heterodimer composed of CysD, the smaller subunit, and CysN.</text>
</comment>
<comment type="similarity">
    <text evidence="2">Belongs to the TRAFAC class translation factor GTPase superfamily. Classic translation factor GTPase family. CysN/NodQ subfamily.</text>
</comment>
<sequence>MNSAVEAELAELGIEGYLSQHQHKSMLRFLTCGSVDDGKSTLIGRLLHDTKQIYEDQLAAVHSDSQRVGTTGEKPDLALLVDGLQAEREQGITIDVAYRYFSTQKRKFIIADTPGHEQYTRNMATGASTCDLAVILIDARKGVLDQTRRHSFISNLLGLKHFIVAVNKMDLVDYSQDRFEEIRDQYLEFAENLEGETNIQILPVSALEGINVAAPSKELAWFEGPSLLEVLENVDIDQKRSAGEFRFPVQYVNRPNLDFRGFAGTVASGRVSVGDEIKALPSGKTSKVARIVTFDGDLESAQAGLAVTLTLEDEIDISRGDLIVLENAQIESTNHVLADIVWMTEQPLQPGKAYDIKIAGKKTVGQVETVRHQYDINNLSTHAVDELPLNGIGLCEWSLNETVALDKYRESADTGGFIVIDRLTNVTVGAGLIRDRLDSVEQQVGNFSAFELEFNALVRKHFPHWDAKDLSQLLKS</sequence>
<feature type="chain" id="PRO_1000117920" description="Sulfate adenylyltransferase subunit 1">
    <location>
        <begin position="1"/>
        <end position="476"/>
    </location>
</feature>
<feature type="domain" description="tr-type G">
    <location>
        <begin position="24"/>
        <end position="239"/>
    </location>
</feature>
<feature type="region of interest" description="G1" evidence="1">
    <location>
        <begin position="33"/>
        <end position="40"/>
    </location>
</feature>
<feature type="region of interest" description="G2" evidence="1">
    <location>
        <begin position="91"/>
        <end position="95"/>
    </location>
</feature>
<feature type="region of interest" description="G3" evidence="1">
    <location>
        <begin position="112"/>
        <end position="115"/>
    </location>
</feature>
<feature type="region of interest" description="G4" evidence="1">
    <location>
        <begin position="167"/>
        <end position="170"/>
    </location>
</feature>
<feature type="region of interest" description="G5" evidence="1">
    <location>
        <begin position="205"/>
        <end position="207"/>
    </location>
</feature>
<feature type="binding site" evidence="2">
    <location>
        <begin position="33"/>
        <end position="40"/>
    </location>
    <ligand>
        <name>GTP</name>
        <dbReference type="ChEBI" id="CHEBI:37565"/>
    </ligand>
</feature>
<feature type="binding site" evidence="2">
    <location>
        <begin position="112"/>
        <end position="116"/>
    </location>
    <ligand>
        <name>GTP</name>
        <dbReference type="ChEBI" id="CHEBI:37565"/>
    </ligand>
</feature>
<feature type="binding site" evidence="2">
    <location>
        <begin position="167"/>
        <end position="170"/>
    </location>
    <ligand>
        <name>GTP</name>
        <dbReference type="ChEBI" id="CHEBI:37565"/>
    </ligand>
</feature>
<protein>
    <recommendedName>
        <fullName evidence="2">Sulfate adenylyltransferase subunit 1</fullName>
        <ecNumber evidence="2">2.7.7.4</ecNumber>
    </recommendedName>
    <alternativeName>
        <fullName evidence="2">ATP-sulfurylase large subunit</fullName>
    </alternativeName>
    <alternativeName>
        <fullName evidence="2">Sulfate adenylate transferase</fullName>
        <shortName evidence="2">SAT</shortName>
    </alternativeName>
</protein>
<reference key="1">
    <citation type="submission" date="2009-02" db="EMBL/GenBank/DDBJ databases">
        <title>Vibrio splendidus str. LGP32 complete genome.</title>
        <authorList>
            <person name="Mazel D."/>
            <person name="Le Roux F."/>
        </authorList>
    </citation>
    <scope>NUCLEOTIDE SEQUENCE [LARGE SCALE GENOMIC DNA]</scope>
    <source>
        <strain>LGP32</strain>
    </source>
</reference>
<organism>
    <name type="scientific">Vibrio atlanticus (strain LGP32)</name>
    <name type="common">Vibrio splendidus (strain Mel32)</name>
    <dbReference type="NCBI Taxonomy" id="575788"/>
    <lineage>
        <taxon>Bacteria</taxon>
        <taxon>Pseudomonadati</taxon>
        <taxon>Pseudomonadota</taxon>
        <taxon>Gammaproteobacteria</taxon>
        <taxon>Vibrionales</taxon>
        <taxon>Vibrionaceae</taxon>
        <taxon>Vibrio</taxon>
    </lineage>
</organism>
<gene>
    <name evidence="2" type="primary">cysN</name>
    <name type="ordered locus">VS_2788</name>
</gene>
<proteinExistence type="inferred from homology"/>
<dbReference type="EC" id="2.7.7.4" evidence="2"/>
<dbReference type="EMBL" id="FM954972">
    <property type="protein sequence ID" value="CAV20074.1"/>
    <property type="molecule type" value="Genomic_DNA"/>
</dbReference>
<dbReference type="SMR" id="B7VKY2"/>
<dbReference type="STRING" id="575788.VS_2788"/>
<dbReference type="KEGG" id="vsp:VS_2788"/>
<dbReference type="eggNOG" id="COG2895">
    <property type="taxonomic scope" value="Bacteria"/>
</dbReference>
<dbReference type="HOGENOM" id="CLU_007265_5_2_6"/>
<dbReference type="UniPathway" id="UPA00140">
    <property type="reaction ID" value="UER00204"/>
</dbReference>
<dbReference type="Proteomes" id="UP000009100">
    <property type="component" value="Chromosome 1"/>
</dbReference>
<dbReference type="GO" id="GO:0005524">
    <property type="term" value="F:ATP binding"/>
    <property type="evidence" value="ECO:0007669"/>
    <property type="project" value="UniProtKB-KW"/>
</dbReference>
<dbReference type="GO" id="GO:0005525">
    <property type="term" value="F:GTP binding"/>
    <property type="evidence" value="ECO:0007669"/>
    <property type="project" value="UniProtKB-UniRule"/>
</dbReference>
<dbReference type="GO" id="GO:0003924">
    <property type="term" value="F:GTPase activity"/>
    <property type="evidence" value="ECO:0007669"/>
    <property type="project" value="InterPro"/>
</dbReference>
<dbReference type="GO" id="GO:0004781">
    <property type="term" value="F:sulfate adenylyltransferase (ATP) activity"/>
    <property type="evidence" value="ECO:0007669"/>
    <property type="project" value="UniProtKB-UniRule"/>
</dbReference>
<dbReference type="GO" id="GO:0070814">
    <property type="term" value="P:hydrogen sulfide biosynthetic process"/>
    <property type="evidence" value="ECO:0007669"/>
    <property type="project" value="UniProtKB-UniRule"/>
</dbReference>
<dbReference type="GO" id="GO:0000103">
    <property type="term" value="P:sulfate assimilation"/>
    <property type="evidence" value="ECO:0007669"/>
    <property type="project" value="UniProtKB-UniRule"/>
</dbReference>
<dbReference type="CDD" id="cd04166">
    <property type="entry name" value="CysN_ATPS"/>
    <property type="match status" value="1"/>
</dbReference>
<dbReference type="CDD" id="cd03695">
    <property type="entry name" value="CysN_NodQ_II"/>
    <property type="match status" value="1"/>
</dbReference>
<dbReference type="CDD" id="cd04095">
    <property type="entry name" value="CysN_NoDQ_III"/>
    <property type="match status" value="1"/>
</dbReference>
<dbReference type="FunFam" id="2.40.30.10:FF:000027">
    <property type="entry name" value="Sulfate adenylyltransferase subunit 1"/>
    <property type="match status" value="1"/>
</dbReference>
<dbReference type="FunFam" id="2.40.30.10:FF:000031">
    <property type="entry name" value="Sulfate adenylyltransferase subunit 1"/>
    <property type="match status" value="1"/>
</dbReference>
<dbReference type="FunFam" id="3.40.50.300:FF:000119">
    <property type="entry name" value="Sulfate adenylyltransferase subunit 1"/>
    <property type="match status" value="1"/>
</dbReference>
<dbReference type="Gene3D" id="3.40.50.300">
    <property type="entry name" value="P-loop containing nucleotide triphosphate hydrolases"/>
    <property type="match status" value="1"/>
</dbReference>
<dbReference type="Gene3D" id="2.40.30.10">
    <property type="entry name" value="Translation factors"/>
    <property type="match status" value="2"/>
</dbReference>
<dbReference type="HAMAP" id="MF_00062">
    <property type="entry name" value="Sulf_adenylyltr_sub1"/>
    <property type="match status" value="1"/>
</dbReference>
<dbReference type="InterPro" id="IPR041757">
    <property type="entry name" value="CysN_GTP-bd"/>
</dbReference>
<dbReference type="InterPro" id="IPR044138">
    <property type="entry name" value="CysN_II"/>
</dbReference>
<dbReference type="InterPro" id="IPR044139">
    <property type="entry name" value="CysN_NoDQ_III"/>
</dbReference>
<dbReference type="InterPro" id="IPR031157">
    <property type="entry name" value="G_TR_CS"/>
</dbReference>
<dbReference type="InterPro" id="IPR054696">
    <property type="entry name" value="GTP-eEF1A_C"/>
</dbReference>
<dbReference type="InterPro" id="IPR027417">
    <property type="entry name" value="P-loop_NTPase"/>
</dbReference>
<dbReference type="InterPro" id="IPR005225">
    <property type="entry name" value="Small_GTP-bd"/>
</dbReference>
<dbReference type="InterPro" id="IPR011779">
    <property type="entry name" value="SO4_adenylTrfase_lsu"/>
</dbReference>
<dbReference type="InterPro" id="IPR000795">
    <property type="entry name" value="T_Tr_GTP-bd_dom"/>
</dbReference>
<dbReference type="InterPro" id="IPR050100">
    <property type="entry name" value="TRAFAC_GTPase_members"/>
</dbReference>
<dbReference type="InterPro" id="IPR009000">
    <property type="entry name" value="Transl_B-barrel_sf"/>
</dbReference>
<dbReference type="InterPro" id="IPR009001">
    <property type="entry name" value="Transl_elong_EF1A/Init_IF2_C"/>
</dbReference>
<dbReference type="NCBIfam" id="TIGR02034">
    <property type="entry name" value="CysN"/>
    <property type="match status" value="1"/>
</dbReference>
<dbReference type="NCBIfam" id="NF003478">
    <property type="entry name" value="PRK05124.1"/>
    <property type="match status" value="1"/>
</dbReference>
<dbReference type="NCBIfam" id="TIGR00231">
    <property type="entry name" value="small_GTP"/>
    <property type="match status" value="1"/>
</dbReference>
<dbReference type="PANTHER" id="PTHR23115">
    <property type="entry name" value="TRANSLATION FACTOR"/>
    <property type="match status" value="1"/>
</dbReference>
<dbReference type="Pfam" id="PF22594">
    <property type="entry name" value="GTP-eEF1A_C"/>
    <property type="match status" value="1"/>
</dbReference>
<dbReference type="Pfam" id="PF00009">
    <property type="entry name" value="GTP_EFTU"/>
    <property type="match status" value="1"/>
</dbReference>
<dbReference type="PRINTS" id="PR00315">
    <property type="entry name" value="ELONGATNFCT"/>
</dbReference>
<dbReference type="SUPFAM" id="SSF50465">
    <property type="entry name" value="EF-Tu/eEF-1alpha/eIF2-gamma C-terminal domain"/>
    <property type="match status" value="1"/>
</dbReference>
<dbReference type="SUPFAM" id="SSF52540">
    <property type="entry name" value="P-loop containing nucleoside triphosphate hydrolases"/>
    <property type="match status" value="1"/>
</dbReference>
<dbReference type="SUPFAM" id="SSF50447">
    <property type="entry name" value="Translation proteins"/>
    <property type="match status" value="1"/>
</dbReference>
<dbReference type="PROSITE" id="PS00301">
    <property type="entry name" value="G_TR_1"/>
    <property type="match status" value="1"/>
</dbReference>
<dbReference type="PROSITE" id="PS51722">
    <property type="entry name" value="G_TR_2"/>
    <property type="match status" value="1"/>
</dbReference>